<accession>Q36319</accession>
<geneLocation type="mitochondrion"/>
<sequence length="380" mass="42616">MAPNIRKSHPLLKMINNSLIDLPTPSNISAWWNFGSLLAVCLITQILTGLLLAMHYTADTTLAFSSVAHTCRNVQYGWLIRNLHANGASFFFICIFLHIGRGLYYGSYLYKETWNTGVILLLTLMATAFVGYVLPWGQMSFWGATVITNLFSAVPYIGQTLVEWAWGGFSVDNPTLTRFFALHFLLPFVIAGITIIHLTFLHESGSNNPLGISSNSDKIPFHPYYSIKDILGLTLMFTPFLMLALFSPNLLGDPENFTPANPLVTPPHIKPEWYFLFAYAILRSIPNKLGGVLALAASVLILLLIPFLHKSKQRTMTFRPLSQTLFWLLVANLLILTWIGSQPVEHPFIIIGQMASLSYFSILLILFPMIGTLENKILNY</sequence>
<proteinExistence type="inferred from homology"/>
<organism>
    <name type="scientific">Alectoris rufa</name>
    <name type="common">Red-legged partridge</name>
    <name type="synonym">Tetrao rufus</name>
    <dbReference type="NCBI Taxonomy" id="9079"/>
    <lineage>
        <taxon>Eukaryota</taxon>
        <taxon>Metazoa</taxon>
        <taxon>Chordata</taxon>
        <taxon>Craniata</taxon>
        <taxon>Vertebrata</taxon>
        <taxon>Euteleostomi</taxon>
        <taxon>Archelosauria</taxon>
        <taxon>Archosauria</taxon>
        <taxon>Dinosauria</taxon>
        <taxon>Saurischia</taxon>
        <taxon>Theropoda</taxon>
        <taxon>Coelurosauria</taxon>
        <taxon>Aves</taxon>
        <taxon>Neognathae</taxon>
        <taxon>Galloanserae</taxon>
        <taxon>Galliformes</taxon>
        <taxon>Phasianidae</taxon>
        <taxon>Perdicinae</taxon>
        <taxon>Alectoris</taxon>
    </lineage>
</organism>
<keyword id="KW-0249">Electron transport</keyword>
<keyword id="KW-0349">Heme</keyword>
<keyword id="KW-0408">Iron</keyword>
<keyword id="KW-0472">Membrane</keyword>
<keyword id="KW-0479">Metal-binding</keyword>
<keyword id="KW-0496">Mitochondrion</keyword>
<keyword id="KW-0999">Mitochondrion inner membrane</keyword>
<keyword id="KW-0679">Respiratory chain</keyword>
<keyword id="KW-0812">Transmembrane</keyword>
<keyword id="KW-1133">Transmembrane helix</keyword>
<keyword id="KW-0813">Transport</keyword>
<keyword id="KW-0830">Ubiquinone</keyword>
<reference key="1">
    <citation type="journal article" date="1996" name="Mol. Phylogenet. Evol.">
        <title>A mitochondrial cytochrome b phylogeny of the Alectoris partridges.</title>
        <authorList>
            <person name="Randi E."/>
        </authorList>
    </citation>
    <scope>NUCLEOTIDE SEQUENCE [GENOMIC DNA]</scope>
    <source>
        <tissue>Liver</tissue>
    </source>
</reference>
<evidence type="ECO:0000250" key="1"/>
<evidence type="ECO:0000250" key="2">
    <source>
        <dbReference type="UniProtKB" id="P00157"/>
    </source>
</evidence>
<evidence type="ECO:0000255" key="3">
    <source>
        <dbReference type="PROSITE-ProRule" id="PRU00967"/>
    </source>
</evidence>
<evidence type="ECO:0000255" key="4">
    <source>
        <dbReference type="PROSITE-ProRule" id="PRU00968"/>
    </source>
</evidence>
<dbReference type="EMBL" id="Z48775">
    <property type="protein sequence ID" value="CAA88693.1"/>
    <property type="molecule type" value="Genomic_DNA"/>
</dbReference>
<dbReference type="SMR" id="Q36319"/>
<dbReference type="GO" id="GO:0005743">
    <property type="term" value="C:mitochondrial inner membrane"/>
    <property type="evidence" value="ECO:0007669"/>
    <property type="project" value="UniProtKB-SubCell"/>
</dbReference>
<dbReference type="GO" id="GO:0045275">
    <property type="term" value="C:respiratory chain complex III"/>
    <property type="evidence" value="ECO:0007669"/>
    <property type="project" value="InterPro"/>
</dbReference>
<dbReference type="GO" id="GO:0046872">
    <property type="term" value="F:metal ion binding"/>
    <property type="evidence" value="ECO:0007669"/>
    <property type="project" value="UniProtKB-KW"/>
</dbReference>
<dbReference type="GO" id="GO:0008121">
    <property type="term" value="F:ubiquinol-cytochrome-c reductase activity"/>
    <property type="evidence" value="ECO:0007669"/>
    <property type="project" value="InterPro"/>
</dbReference>
<dbReference type="GO" id="GO:0006122">
    <property type="term" value="P:mitochondrial electron transport, ubiquinol to cytochrome c"/>
    <property type="evidence" value="ECO:0007669"/>
    <property type="project" value="TreeGrafter"/>
</dbReference>
<dbReference type="CDD" id="cd00290">
    <property type="entry name" value="cytochrome_b_C"/>
    <property type="match status" value="1"/>
</dbReference>
<dbReference type="CDD" id="cd00284">
    <property type="entry name" value="Cytochrome_b_N"/>
    <property type="match status" value="1"/>
</dbReference>
<dbReference type="FunFam" id="1.20.810.10:FF:000002">
    <property type="entry name" value="Cytochrome b"/>
    <property type="match status" value="1"/>
</dbReference>
<dbReference type="Gene3D" id="1.20.810.10">
    <property type="entry name" value="Cytochrome Bc1 Complex, Chain C"/>
    <property type="match status" value="1"/>
</dbReference>
<dbReference type="InterPro" id="IPR005798">
    <property type="entry name" value="Cyt_b/b6_C"/>
</dbReference>
<dbReference type="InterPro" id="IPR036150">
    <property type="entry name" value="Cyt_b/b6_C_sf"/>
</dbReference>
<dbReference type="InterPro" id="IPR005797">
    <property type="entry name" value="Cyt_b/b6_N"/>
</dbReference>
<dbReference type="InterPro" id="IPR027387">
    <property type="entry name" value="Cytb/b6-like_sf"/>
</dbReference>
<dbReference type="InterPro" id="IPR030689">
    <property type="entry name" value="Cytochrome_b"/>
</dbReference>
<dbReference type="InterPro" id="IPR048260">
    <property type="entry name" value="Cytochrome_b_C_euk/bac"/>
</dbReference>
<dbReference type="InterPro" id="IPR048259">
    <property type="entry name" value="Cytochrome_b_N_euk/bac"/>
</dbReference>
<dbReference type="InterPro" id="IPR016174">
    <property type="entry name" value="Di-haem_cyt_TM"/>
</dbReference>
<dbReference type="PANTHER" id="PTHR19271">
    <property type="entry name" value="CYTOCHROME B"/>
    <property type="match status" value="1"/>
</dbReference>
<dbReference type="PANTHER" id="PTHR19271:SF16">
    <property type="entry name" value="CYTOCHROME B"/>
    <property type="match status" value="1"/>
</dbReference>
<dbReference type="Pfam" id="PF00032">
    <property type="entry name" value="Cytochrom_B_C"/>
    <property type="match status" value="1"/>
</dbReference>
<dbReference type="Pfam" id="PF00033">
    <property type="entry name" value="Cytochrome_B"/>
    <property type="match status" value="1"/>
</dbReference>
<dbReference type="PIRSF" id="PIRSF038885">
    <property type="entry name" value="COB"/>
    <property type="match status" value="1"/>
</dbReference>
<dbReference type="SUPFAM" id="SSF81648">
    <property type="entry name" value="a domain/subunit of cytochrome bc1 complex (Ubiquinol-cytochrome c reductase)"/>
    <property type="match status" value="1"/>
</dbReference>
<dbReference type="SUPFAM" id="SSF81342">
    <property type="entry name" value="Transmembrane di-heme cytochromes"/>
    <property type="match status" value="1"/>
</dbReference>
<dbReference type="PROSITE" id="PS51003">
    <property type="entry name" value="CYTB_CTER"/>
    <property type="match status" value="1"/>
</dbReference>
<dbReference type="PROSITE" id="PS51002">
    <property type="entry name" value="CYTB_NTER"/>
    <property type="match status" value="1"/>
</dbReference>
<feature type="chain" id="PRO_0000060565" description="Cytochrome b">
    <location>
        <begin position="1"/>
        <end position="380"/>
    </location>
</feature>
<feature type="transmembrane region" description="Helical" evidence="2">
    <location>
        <begin position="34"/>
        <end position="54"/>
    </location>
</feature>
<feature type="transmembrane region" description="Helical" evidence="2">
    <location>
        <begin position="78"/>
        <end position="99"/>
    </location>
</feature>
<feature type="transmembrane region" description="Helical" evidence="2">
    <location>
        <begin position="114"/>
        <end position="134"/>
    </location>
</feature>
<feature type="transmembrane region" description="Helical" evidence="2">
    <location>
        <begin position="179"/>
        <end position="199"/>
    </location>
</feature>
<feature type="transmembrane region" description="Helical" evidence="2">
    <location>
        <begin position="227"/>
        <end position="247"/>
    </location>
</feature>
<feature type="transmembrane region" description="Helical" evidence="2">
    <location>
        <begin position="289"/>
        <end position="309"/>
    </location>
</feature>
<feature type="transmembrane region" description="Helical" evidence="2">
    <location>
        <begin position="321"/>
        <end position="341"/>
    </location>
</feature>
<feature type="transmembrane region" description="Helical" evidence="2">
    <location>
        <begin position="348"/>
        <end position="368"/>
    </location>
</feature>
<feature type="binding site" description="axial binding residue" evidence="2">
    <location>
        <position position="84"/>
    </location>
    <ligand>
        <name>heme b</name>
        <dbReference type="ChEBI" id="CHEBI:60344"/>
        <label>b562</label>
    </ligand>
    <ligandPart>
        <name>Fe</name>
        <dbReference type="ChEBI" id="CHEBI:18248"/>
    </ligandPart>
</feature>
<feature type="binding site" description="axial binding residue" evidence="2">
    <location>
        <position position="98"/>
    </location>
    <ligand>
        <name>heme b</name>
        <dbReference type="ChEBI" id="CHEBI:60344"/>
        <label>b566</label>
    </ligand>
    <ligandPart>
        <name>Fe</name>
        <dbReference type="ChEBI" id="CHEBI:18248"/>
    </ligandPart>
</feature>
<feature type="binding site" description="axial binding residue" evidence="2">
    <location>
        <position position="183"/>
    </location>
    <ligand>
        <name>heme b</name>
        <dbReference type="ChEBI" id="CHEBI:60344"/>
        <label>b562</label>
    </ligand>
    <ligandPart>
        <name>Fe</name>
        <dbReference type="ChEBI" id="CHEBI:18248"/>
    </ligandPart>
</feature>
<feature type="binding site" description="axial binding residue" evidence="2">
    <location>
        <position position="197"/>
    </location>
    <ligand>
        <name>heme b</name>
        <dbReference type="ChEBI" id="CHEBI:60344"/>
        <label>b566</label>
    </ligand>
    <ligandPart>
        <name>Fe</name>
        <dbReference type="ChEBI" id="CHEBI:18248"/>
    </ligandPart>
</feature>
<feature type="binding site" evidence="2">
    <location>
        <position position="202"/>
    </location>
    <ligand>
        <name>a ubiquinone</name>
        <dbReference type="ChEBI" id="CHEBI:16389"/>
    </ligand>
</feature>
<comment type="function">
    <text evidence="2">Component of the ubiquinol-cytochrome c reductase complex (complex III or cytochrome b-c1 complex) that is part of the mitochondrial respiratory chain. The b-c1 complex mediates electron transfer from ubiquinol to cytochrome c. Contributes to the generation of a proton gradient across the mitochondrial membrane that is then used for ATP synthesis.</text>
</comment>
<comment type="cofactor">
    <cofactor evidence="2">
        <name>heme b</name>
        <dbReference type="ChEBI" id="CHEBI:60344"/>
    </cofactor>
    <text evidence="2">Binds 2 heme b groups non-covalently.</text>
</comment>
<comment type="subunit">
    <text evidence="2">The cytochrome bc1 complex contains 11 subunits: 3 respiratory subunits (MT-CYB, CYC1 and UQCRFS1), 2 core proteins (UQCRC1 and UQCRC2) and 6 low-molecular weight proteins (UQCRH/QCR6, UQCRB/QCR7, UQCRQ/QCR8, UQCR10/QCR9, UQCR11/QCR10 and a cleavage product of UQCRFS1). This cytochrome bc1 complex then forms a dimer.</text>
</comment>
<comment type="subcellular location">
    <subcellularLocation>
        <location evidence="2">Mitochondrion inner membrane</location>
        <topology evidence="2">Multi-pass membrane protein</topology>
    </subcellularLocation>
</comment>
<comment type="miscellaneous">
    <text evidence="1">Heme 1 (or BL or b562) is low-potential and absorbs at about 562 nm, and heme 2 (or BH or b566) is high-potential and absorbs at about 566 nm.</text>
</comment>
<comment type="similarity">
    <text evidence="3 4">Belongs to the cytochrome b family.</text>
</comment>
<comment type="caution">
    <text evidence="2">The full-length protein contains only eight transmembrane helices, not nine as predicted by bioinformatics tools.</text>
</comment>
<name>CYB_ALERU</name>
<protein>
    <recommendedName>
        <fullName>Cytochrome b</fullName>
    </recommendedName>
    <alternativeName>
        <fullName>Complex III subunit 3</fullName>
    </alternativeName>
    <alternativeName>
        <fullName>Complex III subunit III</fullName>
    </alternativeName>
    <alternativeName>
        <fullName>Cytochrome b-c1 complex subunit 3</fullName>
    </alternativeName>
    <alternativeName>
        <fullName>Ubiquinol-cytochrome-c reductase complex cytochrome b subunit</fullName>
    </alternativeName>
</protein>
<gene>
    <name type="primary">MT-CYB</name>
    <name type="synonym">COB</name>
    <name type="synonym">CYTB</name>
    <name type="synonym">MTCYB</name>
</gene>